<feature type="chain" id="PRO_0000132132" description="Small ribosomal subunit protein uS13">
    <location>
        <begin position="1"/>
        <end position="118"/>
    </location>
</feature>
<feature type="region of interest" description="Disordered" evidence="2">
    <location>
        <begin position="94"/>
        <end position="118"/>
    </location>
</feature>
<reference key="1">
    <citation type="journal article" date="2000" name="FEMS Microbiol. Lett.">
        <title>Isolation and piezoresponse of the rpoA gene encoding the RNA polymerase alpha subunit from the deep-sea piezophilic bacterium Shewanella violacea.</title>
        <authorList>
            <person name="Nakasone K."/>
            <person name="Ikegami A."/>
            <person name="Fujii S."/>
            <person name="Kato C."/>
            <person name="Horikoshi K."/>
        </authorList>
    </citation>
    <scope>NUCLEOTIDE SEQUENCE [GENOMIC DNA]</scope>
</reference>
<reference key="2">
    <citation type="journal article" date="2010" name="Mol. Biosyst.">
        <title>Complete genome sequence and comparative analysis of Shewanella violacea, a psychrophilic and piezophilic bacterium from deep sea floor sediments.</title>
        <authorList>
            <person name="Aono E."/>
            <person name="Baba T."/>
            <person name="Ara T."/>
            <person name="Nishi T."/>
            <person name="Nakamichi T."/>
            <person name="Inamoto E."/>
            <person name="Toyonaga H."/>
            <person name="Hasegawa M."/>
            <person name="Takai Y."/>
            <person name="Okumura Y."/>
            <person name="Baba M."/>
            <person name="Tomita M."/>
            <person name="Kato C."/>
            <person name="Oshima T."/>
            <person name="Nakasone K."/>
            <person name="Mori H."/>
        </authorList>
    </citation>
    <scope>NUCLEOTIDE SEQUENCE [LARGE SCALE GENOMIC DNA]</scope>
    <source>
        <strain>JCM 10179 / CIP 106290 / LMG 19151 / DSS12</strain>
    </source>
</reference>
<dbReference type="EMBL" id="AB032408">
    <property type="protein sequence ID" value="BAA84522.1"/>
    <property type="molecule type" value="Genomic_DNA"/>
</dbReference>
<dbReference type="EMBL" id="AP011177">
    <property type="protein sequence ID" value="BAJ04111.1"/>
    <property type="molecule type" value="Genomic_DNA"/>
</dbReference>
<dbReference type="RefSeq" id="WP_013053400.1">
    <property type="nucleotide sequence ID" value="NC_014012.1"/>
</dbReference>
<dbReference type="SMR" id="Q9S0R1"/>
<dbReference type="STRING" id="637905.SVI_4140"/>
<dbReference type="KEGG" id="svo:SVI_4140"/>
<dbReference type="eggNOG" id="COG0099">
    <property type="taxonomic scope" value="Bacteria"/>
</dbReference>
<dbReference type="HOGENOM" id="CLU_103849_1_2_6"/>
<dbReference type="OrthoDB" id="9803610at2"/>
<dbReference type="Proteomes" id="UP000002350">
    <property type="component" value="Chromosome"/>
</dbReference>
<dbReference type="GO" id="GO:0005829">
    <property type="term" value="C:cytosol"/>
    <property type="evidence" value="ECO:0007669"/>
    <property type="project" value="TreeGrafter"/>
</dbReference>
<dbReference type="GO" id="GO:0015935">
    <property type="term" value="C:small ribosomal subunit"/>
    <property type="evidence" value="ECO:0007669"/>
    <property type="project" value="TreeGrafter"/>
</dbReference>
<dbReference type="GO" id="GO:0019843">
    <property type="term" value="F:rRNA binding"/>
    <property type="evidence" value="ECO:0007669"/>
    <property type="project" value="UniProtKB-UniRule"/>
</dbReference>
<dbReference type="GO" id="GO:0003735">
    <property type="term" value="F:structural constituent of ribosome"/>
    <property type="evidence" value="ECO:0007669"/>
    <property type="project" value="InterPro"/>
</dbReference>
<dbReference type="GO" id="GO:0000049">
    <property type="term" value="F:tRNA binding"/>
    <property type="evidence" value="ECO:0007669"/>
    <property type="project" value="UniProtKB-UniRule"/>
</dbReference>
<dbReference type="GO" id="GO:0006412">
    <property type="term" value="P:translation"/>
    <property type="evidence" value="ECO:0007669"/>
    <property type="project" value="UniProtKB-UniRule"/>
</dbReference>
<dbReference type="FunFam" id="1.10.8.50:FF:000001">
    <property type="entry name" value="30S ribosomal protein S13"/>
    <property type="match status" value="1"/>
</dbReference>
<dbReference type="FunFam" id="4.10.910.10:FF:000001">
    <property type="entry name" value="30S ribosomal protein S13"/>
    <property type="match status" value="1"/>
</dbReference>
<dbReference type="Gene3D" id="1.10.8.50">
    <property type="match status" value="1"/>
</dbReference>
<dbReference type="Gene3D" id="4.10.910.10">
    <property type="entry name" value="30s ribosomal protein s13, domain 2"/>
    <property type="match status" value="1"/>
</dbReference>
<dbReference type="HAMAP" id="MF_01315">
    <property type="entry name" value="Ribosomal_uS13"/>
    <property type="match status" value="1"/>
</dbReference>
<dbReference type="InterPro" id="IPR027437">
    <property type="entry name" value="Rbsml_uS13_C"/>
</dbReference>
<dbReference type="InterPro" id="IPR001892">
    <property type="entry name" value="Ribosomal_uS13"/>
</dbReference>
<dbReference type="InterPro" id="IPR010979">
    <property type="entry name" value="Ribosomal_uS13-like_H2TH"/>
</dbReference>
<dbReference type="InterPro" id="IPR019980">
    <property type="entry name" value="Ribosomal_uS13_bac-type"/>
</dbReference>
<dbReference type="InterPro" id="IPR018269">
    <property type="entry name" value="Ribosomal_uS13_CS"/>
</dbReference>
<dbReference type="NCBIfam" id="TIGR03631">
    <property type="entry name" value="uS13_bact"/>
    <property type="match status" value="1"/>
</dbReference>
<dbReference type="PANTHER" id="PTHR10871">
    <property type="entry name" value="30S RIBOSOMAL PROTEIN S13/40S RIBOSOMAL PROTEIN S18"/>
    <property type="match status" value="1"/>
</dbReference>
<dbReference type="PANTHER" id="PTHR10871:SF1">
    <property type="entry name" value="SMALL RIBOSOMAL SUBUNIT PROTEIN US13M"/>
    <property type="match status" value="1"/>
</dbReference>
<dbReference type="Pfam" id="PF00416">
    <property type="entry name" value="Ribosomal_S13"/>
    <property type="match status" value="1"/>
</dbReference>
<dbReference type="PIRSF" id="PIRSF002134">
    <property type="entry name" value="Ribosomal_S13"/>
    <property type="match status" value="1"/>
</dbReference>
<dbReference type="SUPFAM" id="SSF46946">
    <property type="entry name" value="S13-like H2TH domain"/>
    <property type="match status" value="1"/>
</dbReference>
<dbReference type="PROSITE" id="PS00646">
    <property type="entry name" value="RIBOSOMAL_S13_1"/>
    <property type="match status" value="1"/>
</dbReference>
<dbReference type="PROSITE" id="PS50159">
    <property type="entry name" value="RIBOSOMAL_S13_2"/>
    <property type="match status" value="1"/>
</dbReference>
<proteinExistence type="inferred from homology"/>
<organism>
    <name type="scientific">Shewanella violacea (strain JCM 10179 / CIP 106290 / LMG 19151 / DSS12)</name>
    <dbReference type="NCBI Taxonomy" id="637905"/>
    <lineage>
        <taxon>Bacteria</taxon>
        <taxon>Pseudomonadati</taxon>
        <taxon>Pseudomonadota</taxon>
        <taxon>Gammaproteobacteria</taxon>
        <taxon>Alteromonadales</taxon>
        <taxon>Shewanellaceae</taxon>
        <taxon>Shewanella</taxon>
    </lineage>
</organism>
<accession>Q9S0R1</accession>
<accession>D4ZE50</accession>
<protein>
    <recommendedName>
        <fullName evidence="1">Small ribosomal subunit protein uS13</fullName>
    </recommendedName>
    <alternativeName>
        <fullName evidence="3">30S ribosomal protein S13</fullName>
    </alternativeName>
</protein>
<evidence type="ECO:0000255" key="1">
    <source>
        <dbReference type="HAMAP-Rule" id="MF_01315"/>
    </source>
</evidence>
<evidence type="ECO:0000256" key="2">
    <source>
        <dbReference type="SAM" id="MobiDB-lite"/>
    </source>
</evidence>
<evidence type="ECO:0000305" key="3"/>
<sequence length="118" mass="13278">MARIAGINIPDQKHTVIALTGIFGIGRTRARAICAATSIAEDAKIKELSEAQIDILREAVAEYTVEGDLRREVSMNIKRLMDLGCYRGIRHRRSLPLRGQRTKTNARTRKGPRKPIRK</sequence>
<comment type="function">
    <text evidence="1">Located at the top of the head of the 30S subunit, it contacts several helices of the 16S rRNA. In the 70S ribosome it contacts the 23S rRNA (bridge B1a) and protein L5 of the 50S subunit (bridge B1b), connecting the 2 subunits; these bridges are implicated in subunit movement. Contacts the tRNAs in the A and P-sites.</text>
</comment>
<comment type="subunit">
    <text evidence="1">Part of the 30S ribosomal subunit. Forms a loose heterodimer with protein S19. Forms two bridges to the 50S subunit in the 70S ribosome.</text>
</comment>
<comment type="similarity">
    <text evidence="1">Belongs to the universal ribosomal protein uS13 family.</text>
</comment>
<gene>
    <name evidence="1" type="primary">rpsM</name>
    <name type="ordered locus">SVI_4140</name>
</gene>
<name>RS13_SHEVD</name>
<keyword id="KW-1185">Reference proteome</keyword>
<keyword id="KW-0687">Ribonucleoprotein</keyword>
<keyword id="KW-0689">Ribosomal protein</keyword>
<keyword id="KW-0694">RNA-binding</keyword>
<keyword id="KW-0699">rRNA-binding</keyword>
<keyword id="KW-0820">tRNA-binding</keyword>